<gene>
    <name evidence="1" type="primary">rplJ</name>
    <name evidence="1" type="synonym">rpl10</name>
    <name type="ordered locus">glr1601</name>
</gene>
<reference key="1">
    <citation type="journal article" date="2003" name="DNA Res.">
        <title>Complete genome structure of Gloeobacter violaceus PCC 7421, a cyanobacterium that lacks thylakoids.</title>
        <authorList>
            <person name="Nakamura Y."/>
            <person name="Kaneko T."/>
            <person name="Sato S."/>
            <person name="Mimuro M."/>
            <person name="Miyashita H."/>
            <person name="Tsuchiya T."/>
            <person name="Sasamoto S."/>
            <person name="Watanabe A."/>
            <person name="Kawashima K."/>
            <person name="Kishida Y."/>
            <person name="Kiyokawa C."/>
            <person name="Kohara M."/>
            <person name="Matsumoto M."/>
            <person name="Matsuno A."/>
            <person name="Nakazaki N."/>
            <person name="Shimpo S."/>
            <person name="Takeuchi C."/>
            <person name="Yamada M."/>
            <person name="Tabata S."/>
        </authorList>
    </citation>
    <scope>NUCLEOTIDE SEQUENCE [LARGE SCALE GENOMIC DNA]</scope>
    <source>
        <strain>ATCC 29082 / PCC 7421</strain>
    </source>
</reference>
<organism>
    <name type="scientific">Gloeobacter violaceus (strain ATCC 29082 / PCC 7421)</name>
    <dbReference type="NCBI Taxonomy" id="251221"/>
    <lineage>
        <taxon>Bacteria</taxon>
        <taxon>Bacillati</taxon>
        <taxon>Cyanobacteriota</taxon>
        <taxon>Cyanophyceae</taxon>
        <taxon>Gloeobacterales</taxon>
        <taxon>Gloeobacteraceae</taxon>
        <taxon>Gloeobacter</taxon>
    </lineage>
</organism>
<accession>Q7NK77</accession>
<keyword id="KW-1185">Reference proteome</keyword>
<keyword id="KW-0687">Ribonucleoprotein</keyword>
<keyword id="KW-0689">Ribosomal protein</keyword>
<keyword id="KW-0694">RNA-binding</keyword>
<keyword id="KW-0699">rRNA-binding</keyword>
<proteinExistence type="inferred from homology"/>
<evidence type="ECO:0000255" key="1">
    <source>
        <dbReference type="HAMAP-Rule" id="MF_00362"/>
    </source>
</evidence>
<evidence type="ECO:0000305" key="2"/>
<protein>
    <recommendedName>
        <fullName evidence="1">Large ribosomal subunit protein uL10</fullName>
    </recommendedName>
    <alternativeName>
        <fullName evidence="2">50S ribosomal protein L10</fullName>
    </alternativeName>
</protein>
<dbReference type="EMBL" id="BA000045">
    <property type="protein sequence ID" value="BAC89542.1"/>
    <property type="molecule type" value="Genomic_DNA"/>
</dbReference>
<dbReference type="RefSeq" id="NP_924547.1">
    <property type="nucleotide sequence ID" value="NC_005125.1"/>
</dbReference>
<dbReference type="RefSeq" id="WP_011141600.1">
    <property type="nucleotide sequence ID" value="NC_005125.1"/>
</dbReference>
<dbReference type="SMR" id="Q7NK77"/>
<dbReference type="FunCoup" id="Q7NK77">
    <property type="interactions" value="260"/>
</dbReference>
<dbReference type="STRING" id="251221.gene:10759091"/>
<dbReference type="EnsemblBacteria" id="BAC89542">
    <property type="protein sequence ID" value="BAC89542"/>
    <property type="gene ID" value="BAC89542"/>
</dbReference>
<dbReference type="KEGG" id="gvi:glr1601"/>
<dbReference type="PATRIC" id="fig|251221.4.peg.1639"/>
<dbReference type="eggNOG" id="COG0244">
    <property type="taxonomic scope" value="Bacteria"/>
</dbReference>
<dbReference type="HOGENOM" id="CLU_092227_1_1_3"/>
<dbReference type="InParanoid" id="Q7NK77"/>
<dbReference type="OrthoDB" id="9808307at2"/>
<dbReference type="PhylomeDB" id="Q7NK77"/>
<dbReference type="Proteomes" id="UP000000557">
    <property type="component" value="Chromosome"/>
</dbReference>
<dbReference type="GO" id="GO:0022625">
    <property type="term" value="C:cytosolic large ribosomal subunit"/>
    <property type="evidence" value="ECO:0000318"/>
    <property type="project" value="GO_Central"/>
</dbReference>
<dbReference type="GO" id="GO:0070180">
    <property type="term" value="F:large ribosomal subunit rRNA binding"/>
    <property type="evidence" value="ECO:0007669"/>
    <property type="project" value="UniProtKB-UniRule"/>
</dbReference>
<dbReference type="GO" id="GO:0003735">
    <property type="term" value="F:structural constituent of ribosome"/>
    <property type="evidence" value="ECO:0000318"/>
    <property type="project" value="GO_Central"/>
</dbReference>
<dbReference type="GO" id="GO:0006412">
    <property type="term" value="P:translation"/>
    <property type="evidence" value="ECO:0000318"/>
    <property type="project" value="GO_Central"/>
</dbReference>
<dbReference type="CDD" id="cd05797">
    <property type="entry name" value="Ribosomal_L10"/>
    <property type="match status" value="1"/>
</dbReference>
<dbReference type="Gene3D" id="3.30.70.1730">
    <property type="match status" value="1"/>
</dbReference>
<dbReference type="Gene3D" id="6.10.250.290">
    <property type="match status" value="1"/>
</dbReference>
<dbReference type="HAMAP" id="MF_00362">
    <property type="entry name" value="Ribosomal_uL10"/>
    <property type="match status" value="1"/>
</dbReference>
<dbReference type="InterPro" id="IPR001790">
    <property type="entry name" value="Ribosomal_uL10"/>
</dbReference>
<dbReference type="InterPro" id="IPR043141">
    <property type="entry name" value="Ribosomal_uL10-like_sf"/>
</dbReference>
<dbReference type="InterPro" id="IPR022973">
    <property type="entry name" value="Ribosomal_uL10_bac"/>
</dbReference>
<dbReference type="InterPro" id="IPR047865">
    <property type="entry name" value="Ribosomal_uL10_bac_type"/>
</dbReference>
<dbReference type="InterPro" id="IPR002363">
    <property type="entry name" value="Ribosomal_uL10_CS_bac"/>
</dbReference>
<dbReference type="NCBIfam" id="NF000955">
    <property type="entry name" value="PRK00099.1-1"/>
    <property type="match status" value="1"/>
</dbReference>
<dbReference type="PANTHER" id="PTHR11560">
    <property type="entry name" value="39S RIBOSOMAL PROTEIN L10, MITOCHONDRIAL"/>
    <property type="match status" value="1"/>
</dbReference>
<dbReference type="Pfam" id="PF00466">
    <property type="entry name" value="Ribosomal_L10"/>
    <property type="match status" value="1"/>
</dbReference>
<dbReference type="SUPFAM" id="SSF160369">
    <property type="entry name" value="Ribosomal protein L10-like"/>
    <property type="match status" value="1"/>
</dbReference>
<dbReference type="PROSITE" id="PS01109">
    <property type="entry name" value="RIBOSOMAL_L10"/>
    <property type="match status" value="1"/>
</dbReference>
<feature type="chain" id="PRO_0000154637" description="Large ribosomal subunit protein uL10">
    <location>
        <begin position="1"/>
        <end position="192"/>
    </location>
</feature>
<comment type="function">
    <text evidence="1">Forms part of the ribosomal stalk, playing a central role in the interaction of the ribosome with GTP-bound translation factors.</text>
</comment>
<comment type="subunit">
    <text evidence="1">Part of the ribosomal stalk of the 50S ribosomal subunit. The N-terminus interacts with L11 and the large rRNA to form the base of the stalk. The C-terminus forms an elongated spine to which L12 dimers bind in a sequential fashion forming a multimeric L10(L12)X complex.</text>
</comment>
<comment type="similarity">
    <text evidence="1">Belongs to the universal ribosomal protein uL10 family.</text>
</comment>
<name>RL10_GLOVI</name>
<sequence length="192" mass="20843">MGKRPVKEALVGDLQKLLEKSSVVMVIDYRGLSVAEITGLRRRMREHGGTCVVAKNTLMGVATRETAWRNIDPLLAGPSAFLFGNEKLKEMLKTYEDFARETKKTEFRGAVVDGTLVTLDGLKAIADLPPKEVLLAQFAGALKVLPTKIAVGINQVPTKVAVGINEVPAGLARVLEALRKQKEEQQQPQAAA</sequence>